<name>RL2_BREBN</name>
<proteinExistence type="inferred from homology"/>
<dbReference type="EMBL" id="AP008955">
    <property type="protein sequence ID" value="BAH41201.1"/>
    <property type="molecule type" value="Genomic_DNA"/>
</dbReference>
<dbReference type="RefSeq" id="WP_012683985.1">
    <property type="nucleotide sequence ID" value="NC_012491.1"/>
</dbReference>
<dbReference type="SMR" id="C0ZII3"/>
<dbReference type="STRING" id="358681.BBR47_02240"/>
<dbReference type="GeneID" id="87588868"/>
<dbReference type="KEGG" id="bbe:BBR47_02240"/>
<dbReference type="eggNOG" id="COG0090">
    <property type="taxonomic scope" value="Bacteria"/>
</dbReference>
<dbReference type="HOGENOM" id="CLU_036235_2_1_9"/>
<dbReference type="Proteomes" id="UP000001877">
    <property type="component" value="Chromosome"/>
</dbReference>
<dbReference type="GO" id="GO:0015934">
    <property type="term" value="C:large ribosomal subunit"/>
    <property type="evidence" value="ECO:0007669"/>
    <property type="project" value="InterPro"/>
</dbReference>
<dbReference type="GO" id="GO:0019843">
    <property type="term" value="F:rRNA binding"/>
    <property type="evidence" value="ECO:0007669"/>
    <property type="project" value="UniProtKB-UniRule"/>
</dbReference>
<dbReference type="GO" id="GO:0003735">
    <property type="term" value="F:structural constituent of ribosome"/>
    <property type="evidence" value="ECO:0007669"/>
    <property type="project" value="InterPro"/>
</dbReference>
<dbReference type="GO" id="GO:0016740">
    <property type="term" value="F:transferase activity"/>
    <property type="evidence" value="ECO:0007669"/>
    <property type="project" value="InterPro"/>
</dbReference>
<dbReference type="GO" id="GO:0002181">
    <property type="term" value="P:cytoplasmic translation"/>
    <property type="evidence" value="ECO:0007669"/>
    <property type="project" value="TreeGrafter"/>
</dbReference>
<dbReference type="FunFam" id="2.30.30.30:FF:000001">
    <property type="entry name" value="50S ribosomal protein L2"/>
    <property type="match status" value="1"/>
</dbReference>
<dbReference type="FunFam" id="2.40.50.140:FF:000003">
    <property type="entry name" value="50S ribosomal protein L2"/>
    <property type="match status" value="1"/>
</dbReference>
<dbReference type="FunFam" id="4.10.950.10:FF:000001">
    <property type="entry name" value="50S ribosomal protein L2"/>
    <property type="match status" value="1"/>
</dbReference>
<dbReference type="Gene3D" id="2.30.30.30">
    <property type="match status" value="1"/>
</dbReference>
<dbReference type="Gene3D" id="2.40.50.140">
    <property type="entry name" value="Nucleic acid-binding proteins"/>
    <property type="match status" value="1"/>
</dbReference>
<dbReference type="Gene3D" id="4.10.950.10">
    <property type="entry name" value="Ribosomal protein L2, domain 3"/>
    <property type="match status" value="1"/>
</dbReference>
<dbReference type="HAMAP" id="MF_01320_B">
    <property type="entry name" value="Ribosomal_uL2_B"/>
    <property type="match status" value="1"/>
</dbReference>
<dbReference type="InterPro" id="IPR012340">
    <property type="entry name" value="NA-bd_OB-fold"/>
</dbReference>
<dbReference type="InterPro" id="IPR014722">
    <property type="entry name" value="Rib_uL2_dom2"/>
</dbReference>
<dbReference type="InterPro" id="IPR002171">
    <property type="entry name" value="Ribosomal_uL2"/>
</dbReference>
<dbReference type="InterPro" id="IPR005880">
    <property type="entry name" value="Ribosomal_uL2_bac/org-type"/>
</dbReference>
<dbReference type="InterPro" id="IPR022669">
    <property type="entry name" value="Ribosomal_uL2_C"/>
</dbReference>
<dbReference type="InterPro" id="IPR022671">
    <property type="entry name" value="Ribosomal_uL2_CS"/>
</dbReference>
<dbReference type="InterPro" id="IPR014726">
    <property type="entry name" value="Ribosomal_uL2_dom3"/>
</dbReference>
<dbReference type="InterPro" id="IPR022666">
    <property type="entry name" value="Ribosomal_uL2_RNA-bd_dom"/>
</dbReference>
<dbReference type="InterPro" id="IPR008991">
    <property type="entry name" value="Translation_prot_SH3-like_sf"/>
</dbReference>
<dbReference type="NCBIfam" id="TIGR01171">
    <property type="entry name" value="rplB_bact"/>
    <property type="match status" value="1"/>
</dbReference>
<dbReference type="PANTHER" id="PTHR13691:SF5">
    <property type="entry name" value="LARGE RIBOSOMAL SUBUNIT PROTEIN UL2M"/>
    <property type="match status" value="1"/>
</dbReference>
<dbReference type="PANTHER" id="PTHR13691">
    <property type="entry name" value="RIBOSOMAL PROTEIN L2"/>
    <property type="match status" value="1"/>
</dbReference>
<dbReference type="Pfam" id="PF00181">
    <property type="entry name" value="Ribosomal_L2"/>
    <property type="match status" value="1"/>
</dbReference>
<dbReference type="Pfam" id="PF03947">
    <property type="entry name" value="Ribosomal_L2_C"/>
    <property type="match status" value="1"/>
</dbReference>
<dbReference type="PIRSF" id="PIRSF002158">
    <property type="entry name" value="Ribosomal_L2"/>
    <property type="match status" value="1"/>
</dbReference>
<dbReference type="SMART" id="SM01383">
    <property type="entry name" value="Ribosomal_L2"/>
    <property type="match status" value="1"/>
</dbReference>
<dbReference type="SMART" id="SM01382">
    <property type="entry name" value="Ribosomal_L2_C"/>
    <property type="match status" value="1"/>
</dbReference>
<dbReference type="SUPFAM" id="SSF50249">
    <property type="entry name" value="Nucleic acid-binding proteins"/>
    <property type="match status" value="1"/>
</dbReference>
<dbReference type="SUPFAM" id="SSF50104">
    <property type="entry name" value="Translation proteins SH3-like domain"/>
    <property type="match status" value="1"/>
</dbReference>
<dbReference type="PROSITE" id="PS00467">
    <property type="entry name" value="RIBOSOMAL_L2"/>
    <property type="match status" value="1"/>
</dbReference>
<sequence length="276" mass="30299">MGIKKFKPTSPGRRQMTVSTFEEITTSTPEKSLLAPLSKKAGRNNQGRITVRHQGGGHKRKYRIIDFKRNKDGIIGRVATIEYDPNRSANIALINYADGEKRYIIAPHNLKVGDQIVSGADADIKIGNALPMEKIPVGTTIHNIELKPGKGGQLVRAAGTSAQLLGRDGEFVIVRLSSGETRRIHNVCRATIGQVGNLDHELLNIGKAGRSRWLGIRPTVRGSVMNPNDHPHGGGEGRAPIGRKAPVTPWGKPTLGLKTRKKKNKSDQYIIRRRKK</sequence>
<protein>
    <recommendedName>
        <fullName evidence="1">Large ribosomal subunit protein uL2</fullName>
    </recommendedName>
    <alternativeName>
        <fullName evidence="3">50S ribosomal protein L2</fullName>
    </alternativeName>
</protein>
<accession>C0ZII3</accession>
<organism>
    <name type="scientific">Brevibacillus brevis (strain 47 / JCM 6285 / NBRC 100599)</name>
    <dbReference type="NCBI Taxonomy" id="358681"/>
    <lineage>
        <taxon>Bacteria</taxon>
        <taxon>Bacillati</taxon>
        <taxon>Bacillota</taxon>
        <taxon>Bacilli</taxon>
        <taxon>Bacillales</taxon>
        <taxon>Paenibacillaceae</taxon>
        <taxon>Brevibacillus</taxon>
    </lineage>
</organism>
<comment type="function">
    <text evidence="1">One of the primary rRNA binding proteins. Required for association of the 30S and 50S subunits to form the 70S ribosome, for tRNA binding and peptide bond formation. It has been suggested to have peptidyltransferase activity; this is somewhat controversial. Makes several contacts with the 16S rRNA in the 70S ribosome.</text>
</comment>
<comment type="subunit">
    <text evidence="1">Part of the 50S ribosomal subunit. Forms a bridge to the 30S subunit in the 70S ribosome.</text>
</comment>
<comment type="similarity">
    <text evidence="1">Belongs to the universal ribosomal protein uL2 family.</text>
</comment>
<keyword id="KW-1185">Reference proteome</keyword>
<keyword id="KW-0687">Ribonucleoprotein</keyword>
<keyword id="KW-0689">Ribosomal protein</keyword>
<keyword id="KW-0694">RNA-binding</keyword>
<keyword id="KW-0699">rRNA-binding</keyword>
<evidence type="ECO:0000255" key="1">
    <source>
        <dbReference type="HAMAP-Rule" id="MF_01320"/>
    </source>
</evidence>
<evidence type="ECO:0000256" key="2">
    <source>
        <dbReference type="SAM" id="MobiDB-lite"/>
    </source>
</evidence>
<evidence type="ECO:0000305" key="3"/>
<gene>
    <name evidence="1" type="primary">rplB</name>
    <name type="ordered locus">BBR47_02240</name>
</gene>
<reference key="1">
    <citation type="submission" date="2005-03" db="EMBL/GenBank/DDBJ databases">
        <title>Brevibacillus brevis strain 47, complete genome.</title>
        <authorList>
            <person name="Hosoyama A."/>
            <person name="Yamada R."/>
            <person name="Hongo Y."/>
            <person name="Terui Y."/>
            <person name="Ankai A."/>
            <person name="Masuyama W."/>
            <person name="Sekiguchi M."/>
            <person name="Takeda T."/>
            <person name="Asano K."/>
            <person name="Ohji S."/>
            <person name="Ichikawa N."/>
            <person name="Narita S."/>
            <person name="Aoki N."/>
            <person name="Miura H."/>
            <person name="Matsushita S."/>
            <person name="Sekigawa T."/>
            <person name="Yamagata H."/>
            <person name="Yoshikawa H."/>
            <person name="Udaka S."/>
            <person name="Tanikawa S."/>
            <person name="Fujita N."/>
        </authorList>
    </citation>
    <scope>NUCLEOTIDE SEQUENCE [LARGE SCALE GENOMIC DNA]</scope>
    <source>
        <strain>47 / JCM 6285 / NBRC 100599</strain>
    </source>
</reference>
<feature type="chain" id="PRO_1000165725" description="Large ribosomal subunit protein uL2">
    <location>
        <begin position="1"/>
        <end position="276"/>
    </location>
</feature>
<feature type="region of interest" description="Disordered" evidence="2">
    <location>
        <begin position="221"/>
        <end position="276"/>
    </location>
</feature>